<protein>
    <recommendedName>
        <fullName>Probable acyl-CoA dehydrogenase YngJ</fullName>
        <ecNumber>1.3.99.-</ecNumber>
    </recommendedName>
</protein>
<feature type="chain" id="PRO_0000380229" description="Probable acyl-CoA dehydrogenase YngJ">
    <location>
        <begin position="1"/>
        <end position="380"/>
    </location>
</feature>
<feature type="active site" description="Proton acceptor" evidence="1">
    <location>
        <position position="364"/>
    </location>
</feature>
<feature type="binding site" evidence="1">
    <location>
        <begin position="123"/>
        <end position="132"/>
    </location>
    <ligand>
        <name>FAD</name>
        <dbReference type="ChEBI" id="CHEBI:57692"/>
    </ligand>
</feature>
<feature type="binding site" evidence="1">
    <location>
        <begin position="156"/>
        <end position="158"/>
    </location>
    <ligand>
        <name>FAD</name>
        <dbReference type="ChEBI" id="CHEBI:57692"/>
    </ligand>
</feature>
<feature type="binding site" evidence="1">
    <location>
        <position position="269"/>
    </location>
    <ligand>
        <name>FAD</name>
        <dbReference type="ChEBI" id="CHEBI:57692"/>
    </ligand>
</feature>
<feature type="binding site" evidence="1">
    <location>
        <begin position="337"/>
        <end position="341"/>
    </location>
    <ligand>
        <name>FAD</name>
        <dbReference type="ChEBI" id="CHEBI:57692"/>
    </ligand>
</feature>
<feature type="binding site" evidence="1">
    <location>
        <begin position="366"/>
        <end position="368"/>
    </location>
    <ligand>
        <name>FAD</name>
        <dbReference type="ChEBI" id="CHEBI:57692"/>
    </ligand>
</feature>
<proteinExistence type="inferred from homology"/>
<reference key="1">
    <citation type="journal article" date="1997" name="Microbiology">
        <title>Sequence completion, identification and definition of the fengycin operon in Bacillus subtilis 168.</title>
        <authorList>
            <person name="Tosato V."/>
            <person name="Albertini A.M."/>
            <person name="Zotti M."/>
            <person name="Sonda S."/>
            <person name="Bruschi C.V."/>
        </authorList>
    </citation>
    <scope>NUCLEOTIDE SEQUENCE [GENOMIC DNA]</scope>
    <source>
        <strain>168</strain>
    </source>
</reference>
<reference key="2">
    <citation type="journal article" date="1997" name="Nature">
        <title>The complete genome sequence of the Gram-positive bacterium Bacillus subtilis.</title>
        <authorList>
            <person name="Kunst F."/>
            <person name="Ogasawara N."/>
            <person name="Moszer I."/>
            <person name="Albertini A.M."/>
            <person name="Alloni G."/>
            <person name="Azevedo V."/>
            <person name="Bertero M.G."/>
            <person name="Bessieres P."/>
            <person name="Bolotin A."/>
            <person name="Borchert S."/>
            <person name="Borriss R."/>
            <person name="Boursier L."/>
            <person name="Brans A."/>
            <person name="Braun M."/>
            <person name="Brignell S.C."/>
            <person name="Bron S."/>
            <person name="Brouillet S."/>
            <person name="Bruschi C.V."/>
            <person name="Caldwell B."/>
            <person name="Capuano V."/>
            <person name="Carter N.M."/>
            <person name="Choi S.-K."/>
            <person name="Codani J.-J."/>
            <person name="Connerton I.F."/>
            <person name="Cummings N.J."/>
            <person name="Daniel R.A."/>
            <person name="Denizot F."/>
            <person name="Devine K.M."/>
            <person name="Duesterhoeft A."/>
            <person name="Ehrlich S.D."/>
            <person name="Emmerson P.T."/>
            <person name="Entian K.-D."/>
            <person name="Errington J."/>
            <person name="Fabret C."/>
            <person name="Ferrari E."/>
            <person name="Foulger D."/>
            <person name="Fritz C."/>
            <person name="Fujita M."/>
            <person name="Fujita Y."/>
            <person name="Fuma S."/>
            <person name="Galizzi A."/>
            <person name="Galleron N."/>
            <person name="Ghim S.-Y."/>
            <person name="Glaser P."/>
            <person name="Goffeau A."/>
            <person name="Golightly E.J."/>
            <person name="Grandi G."/>
            <person name="Guiseppi G."/>
            <person name="Guy B.J."/>
            <person name="Haga K."/>
            <person name="Haiech J."/>
            <person name="Harwood C.R."/>
            <person name="Henaut A."/>
            <person name="Hilbert H."/>
            <person name="Holsappel S."/>
            <person name="Hosono S."/>
            <person name="Hullo M.-F."/>
            <person name="Itaya M."/>
            <person name="Jones L.-M."/>
            <person name="Joris B."/>
            <person name="Karamata D."/>
            <person name="Kasahara Y."/>
            <person name="Klaerr-Blanchard M."/>
            <person name="Klein C."/>
            <person name="Kobayashi Y."/>
            <person name="Koetter P."/>
            <person name="Koningstein G."/>
            <person name="Krogh S."/>
            <person name="Kumano M."/>
            <person name="Kurita K."/>
            <person name="Lapidus A."/>
            <person name="Lardinois S."/>
            <person name="Lauber J."/>
            <person name="Lazarevic V."/>
            <person name="Lee S.-M."/>
            <person name="Levine A."/>
            <person name="Liu H."/>
            <person name="Masuda S."/>
            <person name="Mauel C."/>
            <person name="Medigue C."/>
            <person name="Medina N."/>
            <person name="Mellado R.P."/>
            <person name="Mizuno M."/>
            <person name="Moestl D."/>
            <person name="Nakai S."/>
            <person name="Noback M."/>
            <person name="Noone D."/>
            <person name="O'Reilly M."/>
            <person name="Ogawa K."/>
            <person name="Ogiwara A."/>
            <person name="Oudega B."/>
            <person name="Park S.-H."/>
            <person name="Parro V."/>
            <person name="Pohl T.M."/>
            <person name="Portetelle D."/>
            <person name="Porwollik S."/>
            <person name="Prescott A.M."/>
            <person name="Presecan E."/>
            <person name="Pujic P."/>
            <person name="Purnelle B."/>
            <person name="Rapoport G."/>
            <person name="Rey M."/>
            <person name="Reynolds S."/>
            <person name="Rieger M."/>
            <person name="Rivolta C."/>
            <person name="Rocha E."/>
            <person name="Roche B."/>
            <person name="Rose M."/>
            <person name="Sadaie Y."/>
            <person name="Sato T."/>
            <person name="Scanlan E."/>
            <person name="Schleich S."/>
            <person name="Schroeter R."/>
            <person name="Scoffone F."/>
            <person name="Sekiguchi J."/>
            <person name="Sekowska A."/>
            <person name="Seror S.J."/>
            <person name="Serror P."/>
            <person name="Shin B.-S."/>
            <person name="Soldo B."/>
            <person name="Sorokin A."/>
            <person name="Tacconi E."/>
            <person name="Takagi T."/>
            <person name="Takahashi H."/>
            <person name="Takemaru K."/>
            <person name="Takeuchi M."/>
            <person name="Tamakoshi A."/>
            <person name="Tanaka T."/>
            <person name="Terpstra P."/>
            <person name="Tognoni A."/>
            <person name="Tosato V."/>
            <person name="Uchiyama S."/>
            <person name="Vandenbol M."/>
            <person name="Vannier F."/>
            <person name="Vassarotti A."/>
            <person name="Viari A."/>
            <person name="Wambutt R."/>
            <person name="Wedler E."/>
            <person name="Wedler H."/>
            <person name="Weitzenegger T."/>
            <person name="Winters P."/>
            <person name="Wipat A."/>
            <person name="Yamamoto H."/>
            <person name="Yamane K."/>
            <person name="Yasumoto K."/>
            <person name="Yata K."/>
            <person name="Yoshida K."/>
            <person name="Yoshikawa H.-F."/>
            <person name="Zumstein E."/>
            <person name="Yoshikawa H."/>
            <person name="Danchin A."/>
        </authorList>
    </citation>
    <scope>NUCLEOTIDE SEQUENCE [LARGE SCALE GENOMIC DNA]</scope>
    <source>
        <strain>168</strain>
    </source>
</reference>
<accession>O34421</accession>
<accession>Q799L4</accession>
<evidence type="ECO:0000250" key="1"/>
<evidence type="ECO:0000305" key="2"/>
<name>ACDC_BACSU</name>
<dbReference type="EC" id="1.3.99.-"/>
<dbReference type="EMBL" id="Y13917">
    <property type="protein sequence ID" value="CAA74221.1"/>
    <property type="molecule type" value="Genomic_DNA"/>
</dbReference>
<dbReference type="EMBL" id="AL009126">
    <property type="protein sequence ID" value="CAB13709.1"/>
    <property type="molecule type" value="Genomic_DNA"/>
</dbReference>
<dbReference type="PIR" id="G69893">
    <property type="entry name" value="G69893"/>
</dbReference>
<dbReference type="RefSeq" id="WP_003245114.1">
    <property type="nucleotide sequence ID" value="NZ_OZ025638.1"/>
</dbReference>
<dbReference type="SMR" id="O34421"/>
<dbReference type="FunCoup" id="O34421">
    <property type="interactions" value="540"/>
</dbReference>
<dbReference type="STRING" id="224308.BSU18260"/>
<dbReference type="PaxDb" id="224308-BSU18260"/>
<dbReference type="EnsemblBacteria" id="CAB13709">
    <property type="protein sequence ID" value="CAB13709"/>
    <property type="gene ID" value="BSU_18260"/>
</dbReference>
<dbReference type="GeneID" id="939996"/>
<dbReference type="KEGG" id="bsu:BSU18260"/>
<dbReference type="PATRIC" id="fig|224308.179.peg.1992"/>
<dbReference type="eggNOG" id="COG1960">
    <property type="taxonomic scope" value="Bacteria"/>
</dbReference>
<dbReference type="InParanoid" id="O34421"/>
<dbReference type="OrthoDB" id="9802447at2"/>
<dbReference type="PhylomeDB" id="O34421"/>
<dbReference type="BioCyc" id="BSUB:BSU18260-MONOMER"/>
<dbReference type="Proteomes" id="UP000001570">
    <property type="component" value="Chromosome"/>
</dbReference>
<dbReference type="GO" id="GO:0005737">
    <property type="term" value="C:cytoplasm"/>
    <property type="evidence" value="ECO:0000318"/>
    <property type="project" value="GO_Central"/>
</dbReference>
<dbReference type="GO" id="GO:0003995">
    <property type="term" value="F:acyl-CoA dehydrogenase activity"/>
    <property type="evidence" value="ECO:0000318"/>
    <property type="project" value="GO_Central"/>
</dbReference>
<dbReference type="GO" id="GO:0050660">
    <property type="term" value="F:flavin adenine dinucleotide binding"/>
    <property type="evidence" value="ECO:0007669"/>
    <property type="project" value="InterPro"/>
</dbReference>
<dbReference type="GO" id="GO:0033539">
    <property type="term" value="P:fatty acid beta-oxidation using acyl-CoA dehydrogenase"/>
    <property type="evidence" value="ECO:0000318"/>
    <property type="project" value="GO_Central"/>
</dbReference>
<dbReference type="CDD" id="cd01158">
    <property type="entry name" value="SCAD_SBCAD"/>
    <property type="match status" value="1"/>
</dbReference>
<dbReference type="FunFam" id="2.40.110.10:FF:000009">
    <property type="entry name" value="Acyl-CoA dehydrogenase"/>
    <property type="match status" value="1"/>
</dbReference>
<dbReference type="FunFam" id="1.10.540.10:FF:000002">
    <property type="entry name" value="Acyl-CoA dehydrogenase FadE19"/>
    <property type="match status" value="1"/>
</dbReference>
<dbReference type="FunFam" id="1.20.140.10:FF:000004">
    <property type="entry name" value="Acyl-CoA dehydrogenase FadE25"/>
    <property type="match status" value="1"/>
</dbReference>
<dbReference type="Gene3D" id="1.10.540.10">
    <property type="entry name" value="Acyl-CoA dehydrogenase/oxidase, N-terminal domain"/>
    <property type="match status" value="1"/>
</dbReference>
<dbReference type="Gene3D" id="2.40.110.10">
    <property type="entry name" value="Butyryl-CoA Dehydrogenase, subunit A, domain 2"/>
    <property type="match status" value="1"/>
</dbReference>
<dbReference type="Gene3D" id="1.20.140.10">
    <property type="entry name" value="Butyryl-CoA Dehydrogenase, subunit A, domain 3"/>
    <property type="match status" value="1"/>
</dbReference>
<dbReference type="InterPro" id="IPR006089">
    <property type="entry name" value="Acyl-CoA_DH_CS"/>
</dbReference>
<dbReference type="InterPro" id="IPR006091">
    <property type="entry name" value="Acyl-CoA_Oxase/DH_mid-dom"/>
</dbReference>
<dbReference type="InterPro" id="IPR046373">
    <property type="entry name" value="Acyl-CoA_Oxase/DH_mid-dom_sf"/>
</dbReference>
<dbReference type="InterPro" id="IPR036250">
    <property type="entry name" value="AcylCo_DH-like_C"/>
</dbReference>
<dbReference type="InterPro" id="IPR009075">
    <property type="entry name" value="AcylCo_DH/oxidase_C"/>
</dbReference>
<dbReference type="InterPro" id="IPR013786">
    <property type="entry name" value="AcylCoA_DH/ox_N"/>
</dbReference>
<dbReference type="InterPro" id="IPR037069">
    <property type="entry name" value="AcylCoA_DH/ox_N_sf"/>
</dbReference>
<dbReference type="InterPro" id="IPR009100">
    <property type="entry name" value="AcylCoA_DH/oxidase_NM_dom_sf"/>
</dbReference>
<dbReference type="PANTHER" id="PTHR43884">
    <property type="entry name" value="ACYL-COA DEHYDROGENASE"/>
    <property type="match status" value="1"/>
</dbReference>
<dbReference type="PANTHER" id="PTHR43884:SF12">
    <property type="entry name" value="ISOVALERYL-COA DEHYDROGENASE, MITOCHONDRIAL-RELATED"/>
    <property type="match status" value="1"/>
</dbReference>
<dbReference type="Pfam" id="PF00441">
    <property type="entry name" value="Acyl-CoA_dh_1"/>
    <property type="match status" value="1"/>
</dbReference>
<dbReference type="Pfam" id="PF02770">
    <property type="entry name" value="Acyl-CoA_dh_M"/>
    <property type="match status" value="1"/>
</dbReference>
<dbReference type="Pfam" id="PF02771">
    <property type="entry name" value="Acyl-CoA_dh_N"/>
    <property type="match status" value="1"/>
</dbReference>
<dbReference type="PIRSF" id="PIRSF016578">
    <property type="entry name" value="HsaA"/>
    <property type="match status" value="1"/>
</dbReference>
<dbReference type="SUPFAM" id="SSF47203">
    <property type="entry name" value="Acyl-CoA dehydrogenase C-terminal domain-like"/>
    <property type="match status" value="1"/>
</dbReference>
<dbReference type="SUPFAM" id="SSF56645">
    <property type="entry name" value="Acyl-CoA dehydrogenase NM domain-like"/>
    <property type="match status" value="1"/>
</dbReference>
<dbReference type="PROSITE" id="PS00072">
    <property type="entry name" value="ACYL_COA_DH_1"/>
    <property type="match status" value="1"/>
</dbReference>
<dbReference type="PROSITE" id="PS00073">
    <property type="entry name" value="ACYL_COA_DH_2"/>
    <property type="match status" value="1"/>
</dbReference>
<keyword id="KW-0274">FAD</keyword>
<keyword id="KW-0285">Flavoprotein</keyword>
<keyword id="KW-0560">Oxidoreductase</keyword>
<keyword id="KW-1185">Reference proteome</keyword>
<gene>
    <name type="primary">yngJ</name>
    <name type="ordered locus">BSU18260</name>
</gene>
<comment type="catalytic activity">
    <reaction>
        <text>a 2,3-saturated acyl-CoA + A = a 2,3-dehydroacyl-CoA + AH2</text>
        <dbReference type="Rhea" id="RHEA:48608"/>
        <dbReference type="ChEBI" id="CHEBI:13193"/>
        <dbReference type="ChEBI" id="CHEBI:17499"/>
        <dbReference type="ChEBI" id="CHEBI:60015"/>
        <dbReference type="ChEBI" id="CHEBI:65111"/>
    </reaction>
</comment>
<comment type="cofactor">
    <cofactor evidence="1">
        <name>FAD</name>
        <dbReference type="ChEBI" id="CHEBI:57692"/>
    </cofactor>
</comment>
<comment type="similarity">
    <text evidence="2">Belongs to the acyl-CoA dehydrogenase family.</text>
</comment>
<organism>
    <name type="scientific">Bacillus subtilis (strain 168)</name>
    <dbReference type="NCBI Taxonomy" id="224308"/>
    <lineage>
        <taxon>Bacteria</taxon>
        <taxon>Bacillati</taxon>
        <taxon>Bacillota</taxon>
        <taxon>Bacilli</taxon>
        <taxon>Bacillales</taxon>
        <taxon>Bacillaceae</taxon>
        <taxon>Bacillus</taxon>
    </lineage>
</organism>
<sequence length="380" mass="40919">MNFELTKEQQMVREMVKDFAKKEIAPHAEHVDQTGEFPMQTFKKMGELGLMGIPFPEEYGGSGGDTISYALAVEEVGKACGSTGLSYAAAVSLGASPLYYFGTEEQKQTHLTPLASGTALGSFGLTEPNAGSDAGGTQTKAISNGDEYVINGEKCWITNASYARTVIVTAVTGKNKDGKNIISALIVPTDTPGLTITSPYDKMGVRGSNTAEILLEDVRVPAANLLGDPTKGFKQFLYTLDGGRISIAALAVGIAQAALDASLAYAKERKQFGQPISSFQAIQFKLADMAMEIDLARQMVLKAAWLKDHNRPFTKEAAYAKLFASEMATRACNQAIQIHGGSGYMKEYGVERMLRDAKLMEIGEGTSEIQRLVIARQLLK</sequence>